<gene>
    <name type="primary">CYP71A19</name>
    <name type="ordered locus">At4g13290</name>
    <name type="ORF">T9E8.30</name>
</gene>
<name>C71AJ_ARATH</name>
<feature type="chain" id="PRO_0000052069" description="Cytochrome P450 71A19">
    <location>
        <begin position="1"/>
        <end position="490"/>
    </location>
</feature>
<feature type="transmembrane region" description="Helical" evidence="2">
    <location>
        <begin position="3"/>
        <end position="23"/>
    </location>
</feature>
<feature type="binding site" description="axial binding residue" evidence="1">
    <location>
        <position position="433"/>
    </location>
    <ligand>
        <name>heme</name>
        <dbReference type="ChEBI" id="CHEBI:30413"/>
    </ligand>
    <ligandPart>
        <name>Fe</name>
        <dbReference type="ChEBI" id="CHEBI:18248"/>
    </ligandPart>
</feature>
<proteinExistence type="evidence at transcript level"/>
<reference key="1">
    <citation type="journal article" date="1999" name="Nature">
        <title>Sequence and analysis of chromosome 4 of the plant Arabidopsis thaliana.</title>
        <authorList>
            <person name="Mayer K.F.X."/>
            <person name="Schueller C."/>
            <person name="Wambutt R."/>
            <person name="Murphy G."/>
            <person name="Volckaert G."/>
            <person name="Pohl T."/>
            <person name="Duesterhoeft A."/>
            <person name="Stiekema W."/>
            <person name="Entian K.-D."/>
            <person name="Terryn N."/>
            <person name="Harris B."/>
            <person name="Ansorge W."/>
            <person name="Brandt P."/>
            <person name="Grivell L.A."/>
            <person name="Rieger M."/>
            <person name="Weichselgartner M."/>
            <person name="de Simone V."/>
            <person name="Obermaier B."/>
            <person name="Mache R."/>
            <person name="Mueller M."/>
            <person name="Kreis M."/>
            <person name="Delseny M."/>
            <person name="Puigdomenech P."/>
            <person name="Watson M."/>
            <person name="Schmidtheini T."/>
            <person name="Reichert B."/>
            <person name="Portetelle D."/>
            <person name="Perez-Alonso M."/>
            <person name="Boutry M."/>
            <person name="Bancroft I."/>
            <person name="Vos P."/>
            <person name="Hoheisel J."/>
            <person name="Zimmermann W."/>
            <person name="Wedler H."/>
            <person name="Ridley P."/>
            <person name="Langham S.-A."/>
            <person name="McCullagh B."/>
            <person name="Bilham L."/>
            <person name="Robben J."/>
            <person name="van der Schueren J."/>
            <person name="Grymonprez B."/>
            <person name="Chuang Y.-J."/>
            <person name="Vandenbussche F."/>
            <person name="Braeken M."/>
            <person name="Weltjens I."/>
            <person name="Voet M."/>
            <person name="Bastiaens I."/>
            <person name="Aert R."/>
            <person name="Defoor E."/>
            <person name="Weitzenegger T."/>
            <person name="Bothe G."/>
            <person name="Ramsperger U."/>
            <person name="Hilbert H."/>
            <person name="Braun M."/>
            <person name="Holzer E."/>
            <person name="Brandt A."/>
            <person name="Peters S."/>
            <person name="van Staveren M."/>
            <person name="Dirkse W."/>
            <person name="Mooijman P."/>
            <person name="Klein Lankhorst R."/>
            <person name="Rose M."/>
            <person name="Hauf J."/>
            <person name="Koetter P."/>
            <person name="Berneiser S."/>
            <person name="Hempel S."/>
            <person name="Feldpausch M."/>
            <person name="Lamberth S."/>
            <person name="Van den Daele H."/>
            <person name="De Keyser A."/>
            <person name="Buysshaert C."/>
            <person name="Gielen J."/>
            <person name="Villarroel R."/>
            <person name="De Clercq R."/>
            <person name="van Montagu M."/>
            <person name="Rogers J."/>
            <person name="Cronin A."/>
            <person name="Quail M.A."/>
            <person name="Bray-Allen S."/>
            <person name="Clark L."/>
            <person name="Doggett J."/>
            <person name="Hall S."/>
            <person name="Kay M."/>
            <person name="Lennard N."/>
            <person name="McLay K."/>
            <person name="Mayes R."/>
            <person name="Pettett A."/>
            <person name="Rajandream M.A."/>
            <person name="Lyne M."/>
            <person name="Benes V."/>
            <person name="Rechmann S."/>
            <person name="Borkova D."/>
            <person name="Bloecker H."/>
            <person name="Scharfe M."/>
            <person name="Grimm M."/>
            <person name="Loehnert T.-H."/>
            <person name="Dose S."/>
            <person name="de Haan M."/>
            <person name="Maarse A.C."/>
            <person name="Schaefer M."/>
            <person name="Mueller-Auer S."/>
            <person name="Gabel C."/>
            <person name="Fuchs M."/>
            <person name="Fartmann B."/>
            <person name="Granderath K."/>
            <person name="Dauner D."/>
            <person name="Herzl A."/>
            <person name="Neumann S."/>
            <person name="Argiriou A."/>
            <person name="Vitale D."/>
            <person name="Liguori R."/>
            <person name="Piravandi E."/>
            <person name="Massenet O."/>
            <person name="Quigley F."/>
            <person name="Clabauld G."/>
            <person name="Muendlein A."/>
            <person name="Felber R."/>
            <person name="Schnabl S."/>
            <person name="Hiller R."/>
            <person name="Schmidt W."/>
            <person name="Lecharny A."/>
            <person name="Aubourg S."/>
            <person name="Chefdor F."/>
            <person name="Cooke R."/>
            <person name="Berger C."/>
            <person name="Monfort A."/>
            <person name="Casacuberta E."/>
            <person name="Gibbons T."/>
            <person name="Weber N."/>
            <person name="Vandenbol M."/>
            <person name="Bargues M."/>
            <person name="Terol J."/>
            <person name="Torres A."/>
            <person name="Perez-Perez A."/>
            <person name="Purnelle B."/>
            <person name="Bent E."/>
            <person name="Johnson S."/>
            <person name="Tacon D."/>
            <person name="Jesse T."/>
            <person name="Heijnen L."/>
            <person name="Schwarz S."/>
            <person name="Scholler P."/>
            <person name="Heber S."/>
            <person name="Francs P."/>
            <person name="Bielke C."/>
            <person name="Frishman D."/>
            <person name="Haase D."/>
            <person name="Lemcke K."/>
            <person name="Mewes H.-W."/>
            <person name="Stocker S."/>
            <person name="Zaccaria P."/>
            <person name="Bevan M."/>
            <person name="Wilson R.K."/>
            <person name="de la Bastide M."/>
            <person name="Habermann K."/>
            <person name="Parnell L."/>
            <person name="Dedhia N."/>
            <person name="Gnoj L."/>
            <person name="Schutz K."/>
            <person name="Huang E."/>
            <person name="Spiegel L."/>
            <person name="Sekhon M."/>
            <person name="Murray J."/>
            <person name="Sheet P."/>
            <person name="Cordes M."/>
            <person name="Abu-Threideh J."/>
            <person name="Stoneking T."/>
            <person name="Kalicki J."/>
            <person name="Graves T."/>
            <person name="Harmon G."/>
            <person name="Edwards J."/>
            <person name="Latreille P."/>
            <person name="Courtney L."/>
            <person name="Cloud J."/>
            <person name="Abbott A."/>
            <person name="Scott K."/>
            <person name="Johnson D."/>
            <person name="Minx P."/>
            <person name="Bentley D."/>
            <person name="Fulton B."/>
            <person name="Miller N."/>
            <person name="Greco T."/>
            <person name="Kemp K."/>
            <person name="Kramer J."/>
            <person name="Fulton L."/>
            <person name="Mardis E."/>
            <person name="Dante M."/>
            <person name="Pepin K."/>
            <person name="Hillier L.W."/>
            <person name="Nelson J."/>
            <person name="Spieth J."/>
            <person name="Ryan E."/>
            <person name="Andrews S."/>
            <person name="Geisel C."/>
            <person name="Layman D."/>
            <person name="Du H."/>
            <person name="Ali J."/>
            <person name="Berghoff A."/>
            <person name="Jones K."/>
            <person name="Drone K."/>
            <person name="Cotton M."/>
            <person name="Joshu C."/>
            <person name="Antonoiu B."/>
            <person name="Zidanic M."/>
            <person name="Strong C."/>
            <person name="Sun H."/>
            <person name="Lamar B."/>
            <person name="Yordan C."/>
            <person name="Ma P."/>
            <person name="Zhong J."/>
            <person name="Preston R."/>
            <person name="Vil D."/>
            <person name="Shekher M."/>
            <person name="Matero A."/>
            <person name="Shah R."/>
            <person name="Swaby I.K."/>
            <person name="O'Shaughnessy A."/>
            <person name="Rodriguez M."/>
            <person name="Hoffman J."/>
            <person name="Till S."/>
            <person name="Granat S."/>
            <person name="Shohdy N."/>
            <person name="Hasegawa A."/>
            <person name="Hameed A."/>
            <person name="Lodhi M."/>
            <person name="Johnson A."/>
            <person name="Chen E."/>
            <person name="Marra M.A."/>
            <person name="Martienssen R."/>
            <person name="McCombie W.R."/>
        </authorList>
    </citation>
    <scope>NUCLEOTIDE SEQUENCE [LARGE SCALE GENOMIC DNA]</scope>
    <source>
        <strain>cv. Columbia</strain>
    </source>
</reference>
<reference key="2">
    <citation type="journal article" date="2017" name="Plant J.">
        <title>Araport11: a complete reannotation of the Arabidopsis thaliana reference genome.</title>
        <authorList>
            <person name="Cheng C.Y."/>
            <person name="Krishnakumar V."/>
            <person name="Chan A.P."/>
            <person name="Thibaud-Nissen F."/>
            <person name="Schobel S."/>
            <person name="Town C.D."/>
        </authorList>
    </citation>
    <scope>GENOME REANNOTATION</scope>
    <source>
        <strain>cv. Columbia</strain>
    </source>
</reference>
<reference key="3">
    <citation type="journal article" date="2003" name="Science">
        <title>Empirical analysis of transcriptional activity in the Arabidopsis genome.</title>
        <authorList>
            <person name="Yamada K."/>
            <person name="Lim J."/>
            <person name="Dale J.M."/>
            <person name="Chen H."/>
            <person name="Shinn P."/>
            <person name="Palm C.J."/>
            <person name="Southwick A.M."/>
            <person name="Wu H.C."/>
            <person name="Kim C.J."/>
            <person name="Nguyen M."/>
            <person name="Pham P.K."/>
            <person name="Cheuk R.F."/>
            <person name="Karlin-Newmann G."/>
            <person name="Liu S.X."/>
            <person name="Lam B."/>
            <person name="Sakano H."/>
            <person name="Wu T."/>
            <person name="Yu G."/>
            <person name="Miranda M."/>
            <person name="Quach H.L."/>
            <person name="Tripp M."/>
            <person name="Chang C.H."/>
            <person name="Lee J.M."/>
            <person name="Toriumi M.J."/>
            <person name="Chan M.M."/>
            <person name="Tang C.C."/>
            <person name="Onodera C.S."/>
            <person name="Deng J.M."/>
            <person name="Akiyama K."/>
            <person name="Ansari Y."/>
            <person name="Arakawa T."/>
            <person name="Banh J."/>
            <person name="Banno F."/>
            <person name="Bowser L."/>
            <person name="Brooks S.Y."/>
            <person name="Carninci P."/>
            <person name="Chao Q."/>
            <person name="Choy N."/>
            <person name="Enju A."/>
            <person name="Goldsmith A.D."/>
            <person name="Gurjal M."/>
            <person name="Hansen N.F."/>
            <person name="Hayashizaki Y."/>
            <person name="Johnson-Hopson C."/>
            <person name="Hsuan V.W."/>
            <person name="Iida K."/>
            <person name="Karnes M."/>
            <person name="Khan S."/>
            <person name="Koesema E."/>
            <person name="Ishida J."/>
            <person name="Jiang P.X."/>
            <person name="Jones T."/>
            <person name="Kawai J."/>
            <person name="Kamiya A."/>
            <person name="Meyers C."/>
            <person name="Nakajima M."/>
            <person name="Narusaka M."/>
            <person name="Seki M."/>
            <person name="Sakurai T."/>
            <person name="Satou M."/>
            <person name="Tamse R."/>
            <person name="Vaysberg M."/>
            <person name="Wallender E.K."/>
            <person name="Wong C."/>
            <person name="Yamamura Y."/>
            <person name="Yuan S."/>
            <person name="Shinozaki K."/>
            <person name="Davis R.W."/>
            <person name="Theologis A."/>
            <person name="Ecker J.R."/>
        </authorList>
    </citation>
    <scope>NUCLEOTIDE SEQUENCE [LARGE SCALE MRNA]</scope>
    <source>
        <strain>cv. Columbia</strain>
    </source>
</reference>
<accession>Q9T0K0</accession>
<dbReference type="EC" id="1.14.-.-"/>
<dbReference type="EMBL" id="AL049608">
    <property type="protein sequence ID" value="CAB40764.1"/>
    <property type="molecule type" value="Genomic_DNA"/>
</dbReference>
<dbReference type="EMBL" id="AL161536">
    <property type="protein sequence ID" value="CAB78371.1"/>
    <property type="molecule type" value="Genomic_DNA"/>
</dbReference>
<dbReference type="EMBL" id="CP002687">
    <property type="protein sequence ID" value="AEE83259.1"/>
    <property type="molecule type" value="Genomic_DNA"/>
</dbReference>
<dbReference type="EMBL" id="AY133692">
    <property type="protein sequence ID" value="AAM91626.1"/>
    <property type="molecule type" value="mRNA"/>
</dbReference>
<dbReference type="PIR" id="T06286">
    <property type="entry name" value="T06286"/>
</dbReference>
<dbReference type="RefSeq" id="NP_193065.1">
    <property type="nucleotide sequence ID" value="NM_117402.4"/>
</dbReference>
<dbReference type="SMR" id="Q9T0K0"/>
<dbReference type="FunCoup" id="Q9T0K0">
    <property type="interactions" value="187"/>
</dbReference>
<dbReference type="STRING" id="3702.Q9T0K0"/>
<dbReference type="PaxDb" id="3702-AT4G13290.1"/>
<dbReference type="ProteomicsDB" id="240575"/>
<dbReference type="EnsemblPlants" id="AT4G13290.1">
    <property type="protein sequence ID" value="AT4G13290.1"/>
    <property type="gene ID" value="AT4G13290"/>
</dbReference>
<dbReference type="GeneID" id="826959"/>
<dbReference type="Gramene" id="AT4G13290.1">
    <property type="protein sequence ID" value="AT4G13290.1"/>
    <property type="gene ID" value="AT4G13290"/>
</dbReference>
<dbReference type="KEGG" id="ath:AT4G13290"/>
<dbReference type="Araport" id="AT4G13290"/>
<dbReference type="TAIR" id="AT4G13290">
    <property type="gene designation" value="CYP71A19"/>
</dbReference>
<dbReference type="eggNOG" id="KOG0156">
    <property type="taxonomic scope" value="Eukaryota"/>
</dbReference>
<dbReference type="HOGENOM" id="CLU_001570_4_0_1"/>
<dbReference type="InParanoid" id="Q9T0K0"/>
<dbReference type="OMA" id="EPFVDTC"/>
<dbReference type="PhylomeDB" id="Q9T0K0"/>
<dbReference type="PRO" id="PR:Q9T0K0"/>
<dbReference type="Proteomes" id="UP000006548">
    <property type="component" value="Chromosome 4"/>
</dbReference>
<dbReference type="ExpressionAtlas" id="Q9T0K0">
    <property type="expression patterns" value="baseline and differential"/>
</dbReference>
<dbReference type="GO" id="GO:0016020">
    <property type="term" value="C:membrane"/>
    <property type="evidence" value="ECO:0007669"/>
    <property type="project" value="UniProtKB-SubCell"/>
</dbReference>
<dbReference type="GO" id="GO:0020037">
    <property type="term" value="F:heme binding"/>
    <property type="evidence" value="ECO:0007669"/>
    <property type="project" value="InterPro"/>
</dbReference>
<dbReference type="GO" id="GO:0005506">
    <property type="term" value="F:iron ion binding"/>
    <property type="evidence" value="ECO:0007669"/>
    <property type="project" value="InterPro"/>
</dbReference>
<dbReference type="GO" id="GO:0004497">
    <property type="term" value="F:monooxygenase activity"/>
    <property type="evidence" value="ECO:0007669"/>
    <property type="project" value="UniProtKB-KW"/>
</dbReference>
<dbReference type="GO" id="GO:0016705">
    <property type="term" value="F:oxidoreductase activity, acting on paired donors, with incorporation or reduction of molecular oxygen"/>
    <property type="evidence" value="ECO:0007669"/>
    <property type="project" value="InterPro"/>
</dbReference>
<dbReference type="CDD" id="cd11072">
    <property type="entry name" value="CYP71-like"/>
    <property type="match status" value="1"/>
</dbReference>
<dbReference type="FunFam" id="1.10.630.10:FF:000011">
    <property type="entry name" value="Cytochrome P450 83B1"/>
    <property type="match status" value="1"/>
</dbReference>
<dbReference type="Gene3D" id="1.10.630.10">
    <property type="entry name" value="Cytochrome P450"/>
    <property type="match status" value="1"/>
</dbReference>
<dbReference type="InterPro" id="IPR001128">
    <property type="entry name" value="Cyt_P450"/>
</dbReference>
<dbReference type="InterPro" id="IPR017972">
    <property type="entry name" value="Cyt_P450_CS"/>
</dbReference>
<dbReference type="InterPro" id="IPR002401">
    <property type="entry name" value="Cyt_P450_E_grp-I"/>
</dbReference>
<dbReference type="InterPro" id="IPR036396">
    <property type="entry name" value="Cyt_P450_sf"/>
</dbReference>
<dbReference type="PANTHER" id="PTHR47955:SF15">
    <property type="entry name" value="CYTOCHROME P450 71A2-LIKE"/>
    <property type="match status" value="1"/>
</dbReference>
<dbReference type="PANTHER" id="PTHR47955">
    <property type="entry name" value="CYTOCHROME P450 FAMILY 71 PROTEIN"/>
    <property type="match status" value="1"/>
</dbReference>
<dbReference type="Pfam" id="PF00067">
    <property type="entry name" value="p450"/>
    <property type="match status" value="1"/>
</dbReference>
<dbReference type="PRINTS" id="PR00463">
    <property type="entry name" value="EP450I"/>
</dbReference>
<dbReference type="PRINTS" id="PR00385">
    <property type="entry name" value="P450"/>
</dbReference>
<dbReference type="SUPFAM" id="SSF48264">
    <property type="entry name" value="Cytochrome P450"/>
    <property type="match status" value="1"/>
</dbReference>
<dbReference type="PROSITE" id="PS00086">
    <property type="entry name" value="CYTOCHROME_P450"/>
    <property type="match status" value="1"/>
</dbReference>
<protein>
    <recommendedName>
        <fullName>Cytochrome P450 71A19</fullName>
        <ecNumber>1.14.-.-</ecNumber>
    </recommendedName>
</protein>
<evidence type="ECO:0000250" key="1"/>
<evidence type="ECO:0000255" key="2"/>
<evidence type="ECO:0000305" key="3"/>
<comment type="cofactor">
    <cofactor evidence="1">
        <name>heme</name>
        <dbReference type="ChEBI" id="CHEBI:30413"/>
    </cofactor>
</comment>
<comment type="subcellular location">
    <subcellularLocation>
        <location evidence="3">Membrane</location>
        <topology evidence="3">Single-pass membrane protein</topology>
    </subcellularLocation>
</comment>
<comment type="similarity">
    <text evidence="3">Belongs to the cytochrome P450 family.</text>
</comment>
<sequence length="490" mass="55615">MEIILVTLCLTTLLALLLLKSILKRTTTNNLNLPPSPWRLPVIGNLHQLSLNTHRSLRSLSLRYGPLMLLHFGRTPVLIVSSADVAHDILKTYDVICANRPKTKVIDKILRGGRDVAFAPYGEYWKQMKSICIQNLLSNKMVRSYKKIREDEIKLMIEKVENASSCSPPSPVNLSQLFMTLTNDIICRAALGRKYSSKEDGIDVENIVRAFSALVGEFPIGEYIPSLSWIDKIRGQDHKMEEVDKRFDEFLERVVKEHEDANKDTRSDLVDTLLTIQSDKSALKLIIWDMFLAGTATSLSFLEWAMTELMRNPKVMKKLQEEIRSSSRQGLFVTEKEAEKMDYLQAVIKEALRLRPPAPLMVPRVFSEDVTLKGYNIPAGTQVIINAWAIQRDTTTWGIDAEEFRPERHLDSILDFQGQDFKFIPFGSGKRICPGIGFTSALIGVTLANIVKRFNWRMDVEPQRVQHDLTEATGLVVFRKFPLIAIPSSA</sequence>
<keyword id="KW-0349">Heme</keyword>
<keyword id="KW-0408">Iron</keyword>
<keyword id="KW-0472">Membrane</keyword>
<keyword id="KW-0479">Metal-binding</keyword>
<keyword id="KW-0503">Monooxygenase</keyword>
<keyword id="KW-0560">Oxidoreductase</keyword>
<keyword id="KW-1185">Reference proteome</keyword>
<keyword id="KW-0812">Transmembrane</keyword>
<keyword id="KW-1133">Transmembrane helix</keyword>
<organism>
    <name type="scientific">Arabidopsis thaliana</name>
    <name type="common">Mouse-ear cress</name>
    <dbReference type="NCBI Taxonomy" id="3702"/>
    <lineage>
        <taxon>Eukaryota</taxon>
        <taxon>Viridiplantae</taxon>
        <taxon>Streptophyta</taxon>
        <taxon>Embryophyta</taxon>
        <taxon>Tracheophyta</taxon>
        <taxon>Spermatophyta</taxon>
        <taxon>Magnoliopsida</taxon>
        <taxon>eudicotyledons</taxon>
        <taxon>Gunneridae</taxon>
        <taxon>Pentapetalae</taxon>
        <taxon>rosids</taxon>
        <taxon>malvids</taxon>
        <taxon>Brassicales</taxon>
        <taxon>Brassicaceae</taxon>
        <taxon>Camelineae</taxon>
        <taxon>Arabidopsis</taxon>
    </lineage>
</organism>